<accession>A4SFD5</accession>
<gene>
    <name evidence="1" type="primary">serS</name>
    <name type="ordered locus">Cvib_1182</name>
</gene>
<feature type="chain" id="PRO_1000077207" description="Serine--tRNA ligase">
    <location>
        <begin position="1"/>
        <end position="430"/>
    </location>
</feature>
<feature type="binding site" evidence="1">
    <location>
        <begin position="235"/>
        <end position="237"/>
    </location>
    <ligand>
        <name>L-serine</name>
        <dbReference type="ChEBI" id="CHEBI:33384"/>
    </ligand>
</feature>
<feature type="binding site" evidence="1">
    <location>
        <begin position="266"/>
        <end position="268"/>
    </location>
    <ligand>
        <name>ATP</name>
        <dbReference type="ChEBI" id="CHEBI:30616"/>
    </ligand>
</feature>
<feature type="binding site" evidence="1">
    <location>
        <position position="282"/>
    </location>
    <ligand>
        <name>ATP</name>
        <dbReference type="ChEBI" id="CHEBI:30616"/>
    </ligand>
</feature>
<feature type="binding site" evidence="1">
    <location>
        <position position="289"/>
    </location>
    <ligand>
        <name>L-serine</name>
        <dbReference type="ChEBI" id="CHEBI:33384"/>
    </ligand>
</feature>
<feature type="binding site" evidence="1">
    <location>
        <begin position="353"/>
        <end position="356"/>
    </location>
    <ligand>
        <name>ATP</name>
        <dbReference type="ChEBI" id="CHEBI:30616"/>
    </ligand>
</feature>
<feature type="binding site" evidence="1">
    <location>
        <position position="389"/>
    </location>
    <ligand>
        <name>L-serine</name>
        <dbReference type="ChEBI" id="CHEBI:33384"/>
    </ligand>
</feature>
<evidence type="ECO:0000255" key="1">
    <source>
        <dbReference type="HAMAP-Rule" id="MF_00176"/>
    </source>
</evidence>
<organism>
    <name type="scientific">Chlorobium phaeovibrioides (strain DSM 265 / 1930)</name>
    <name type="common">Prosthecochloris vibrioformis (strain DSM 265)</name>
    <dbReference type="NCBI Taxonomy" id="290318"/>
    <lineage>
        <taxon>Bacteria</taxon>
        <taxon>Pseudomonadati</taxon>
        <taxon>Chlorobiota</taxon>
        <taxon>Chlorobiia</taxon>
        <taxon>Chlorobiales</taxon>
        <taxon>Chlorobiaceae</taxon>
        <taxon>Chlorobium/Pelodictyon group</taxon>
        <taxon>Chlorobium</taxon>
    </lineage>
</organism>
<protein>
    <recommendedName>
        <fullName evidence="1">Serine--tRNA ligase</fullName>
        <ecNumber evidence="1">6.1.1.11</ecNumber>
    </recommendedName>
    <alternativeName>
        <fullName evidence="1">Seryl-tRNA synthetase</fullName>
        <shortName evidence="1">SerRS</shortName>
    </alternativeName>
    <alternativeName>
        <fullName evidence="1">Seryl-tRNA(Ser/Sec) synthetase</fullName>
    </alternativeName>
</protein>
<sequence>MLDITLLRDSPDEIVTMLHNRQQPEDEPKLRQLLEEDAERRKLVQESDELKSLRNRKSKEIAEIKKSGSGSADALILEMQSVGTAIAEMDSRLTALETSMEDILLALPNRLHPSVPVGRSAEENEVFGEPVSFTHPLDFSLKNHLELGKSLGILDFERGAKVSGAGFPVYVGKGARLERALINFMLDSHTEKHGYKEVFPPFMVNRESLRGTGQWPKFAGEVYHAPEDELYLIPTAEVPVTNLHRGELLETESLPISYAAYSACFRREAGSYGKETRGFLRVHQFNKVEMVKFTKPEDSYQALEDIRGHAEAILRALEIPYRVLLLCSGDISANAAKCYDIEVWSPAEEKYLEASSCSNFEDYQARRANIRFRRDGKSKPEFVHTLNGSGLATSRLMVSLMEHYQTPEGGILVPEVLKPYTGFSEITPSA</sequence>
<reference key="1">
    <citation type="submission" date="2007-03" db="EMBL/GenBank/DDBJ databases">
        <title>Complete sequence of Prosthecochloris vibrioformis DSM 265.</title>
        <authorList>
            <consortium name="US DOE Joint Genome Institute"/>
            <person name="Copeland A."/>
            <person name="Lucas S."/>
            <person name="Lapidus A."/>
            <person name="Barry K."/>
            <person name="Detter J.C."/>
            <person name="Glavina del Rio T."/>
            <person name="Hammon N."/>
            <person name="Israni S."/>
            <person name="Pitluck S."/>
            <person name="Schmutz J."/>
            <person name="Larimer F."/>
            <person name="Land M."/>
            <person name="Hauser L."/>
            <person name="Mikhailova N."/>
            <person name="Li T."/>
            <person name="Overmann J."/>
            <person name="Schuster S.C."/>
            <person name="Bryant D.A."/>
            <person name="Richardson P."/>
        </authorList>
    </citation>
    <scope>NUCLEOTIDE SEQUENCE [LARGE SCALE GENOMIC DNA]</scope>
    <source>
        <strain>DSM 265 / 1930</strain>
    </source>
</reference>
<comment type="function">
    <text evidence="1">Catalyzes the attachment of serine to tRNA(Ser). Is also able to aminoacylate tRNA(Sec) with serine, to form the misacylated tRNA L-seryl-tRNA(Sec), which will be further converted into selenocysteinyl-tRNA(Sec).</text>
</comment>
<comment type="catalytic activity">
    <reaction evidence="1">
        <text>tRNA(Ser) + L-serine + ATP = L-seryl-tRNA(Ser) + AMP + diphosphate + H(+)</text>
        <dbReference type="Rhea" id="RHEA:12292"/>
        <dbReference type="Rhea" id="RHEA-COMP:9669"/>
        <dbReference type="Rhea" id="RHEA-COMP:9703"/>
        <dbReference type="ChEBI" id="CHEBI:15378"/>
        <dbReference type="ChEBI" id="CHEBI:30616"/>
        <dbReference type="ChEBI" id="CHEBI:33019"/>
        <dbReference type="ChEBI" id="CHEBI:33384"/>
        <dbReference type="ChEBI" id="CHEBI:78442"/>
        <dbReference type="ChEBI" id="CHEBI:78533"/>
        <dbReference type="ChEBI" id="CHEBI:456215"/>
        <dbReference type="EC" id="6.1.1.11"/>
    </reaction>
</comment>
<comment type="catalytic activity">
    <reaction evidence="1">
        <text>tRNA(Sec) + L-serine + ATP = L-seryl-tRNA(Sec) + AMP + diphosphate + H(+)</text>
        <dbReference type="Rhea" id="RHEA:42580"/>
        <dbReference type="Rhea" id="RHEA-COMP:9742"/>
        <dbReference type="Rhea" id="RHEA-COMP:10128"/>
        <dbReference type="ChEBI" id="CHEBI:15378"/>
        <dbReference type="ChEBI" id="CHEBI:30616"/>
        <dbReference type="ChEBI" id="CHEBI:33019"/>
        <dbReference type="ChEBI" id="CHEBI:33384"/>
        <dbReference type="ChEBI" id="CHEBI:78442"/>
        <dbReference type="ChEBI" id="CHEBI:78533"/>
        <dbReference type="ChEBI" id="CHEBI:456215"/>
        <dbReference type="EC" id="6.1.1.11"/>
    </reaction>
</comment>
<comment type="pathway">
    <text evidence="1">Aminoacyl-tRNA biosynthesis; selenocysteinyl-tRNA(Sec) biosynthesis; L-seryl-tRNA(Sec) from L-serine and tRNA(Sec): step 1/1.</text>
</comment>
<comment type="subunit">
    <text evidence="1">Homodimer. The tRNA molecule binds across the dimer.</text>
</comment>
<comment type="subcellular location">
    <subcellularLocation>
        <location evidence="1">Cytoplasm</location>
    </subcellularLocation>
</comment>
<comment type="domain">
    <text evidence="1">Consists of two distinct domains, a catalytic core and a N-terminal extension that is involved in tRNA binding.</text>
</comment>
<comment type="similarity">
    <text evidence="1">Belongs to the class-II aminoacyl-tRNA synthetase family. Type-1 seryl-tRNA synthetase subfamily.</text>
</comment>
<dbReference type="EC" id="6.1.1.11" evidence="1"/>
<dbReference type="EMBL" id="CP000607">
    <property type="protein sequence ID" value="ABP37194.1"/>
    <property type="molecule type" value="Genomic_DNA"/>
</dbReference>
<dbReference type="SMR" id="A4SFD5"/>
<dbReference type="STRING" id="290318.Cvib_1182"/>
<dbReference type="KEGG" id="pvi:Cvib_1182"/>
<dbReference type="eggNOG" id="COG0172">
    <property type="taxonomic scope" value="Bacteria"/>
</dbReference>
<dbReference type="HOGENOM" id="CLU_023797_1_1_10"/>
<dbReference type="OrthoDB" id="9804647at2"/>
<dbReference type="UniPathway" id="UPA00906">
    <property type="reaction ID" value="UER00895"/>
</dbReference>
<dbReference type="GO" id="GO:0005737">
    <property type="term" value="C:cytoplasm"/>
    <property type="evidence" value="ECO:0007669"/>
    <property type="project" value="UniProtKB-SubCell"/>
</dbReference>
<dbReference type="GO" id="GO:0005524">
    <property type="term" value="F:ATP binding"/>
    <property type="evidence" value="ECO:0007669"/>
    <property type="project" value="UniProtKB-UniRule"/>
</dbReference>
<dbReference type="GO" id="GO:0004828">
    <property type="term" value="F:serine-tRNA ligase activity"/>
    <property type="evidence" value="ECO:0007669"/>
    <property type="project" value="UniProtKB-UniRule"/>
</dbReference>
<dbReference type="GO" id="GO:0016260">
    <property type="term" value="P:selenocysteine biosynthetic process"/>
    <property type="evidence" value="ECO:0007669"/>
    <property type="project" value="UniProtKB-UniRule"/>
</dbReference>
<dbReference type="GO" id="GO:0006434">
    <property type="term" value="P:seryl-tRNA aminoacylation"/>
    <property type="evidence" value="ECO:0007669"/>
    <property type="project" value="UniProtKB-UniRule"/>
</dbReference>
<dbReference type="CDD" id="cd00770">
    <property type="entry name" value="SerRS_core"/>
    <property type="match status" value="1"/>
</dbReference>
<dbReference type="Gene3D" id="3.30.930.10">
    <property type="entry name" value="Bira Bifunctional Protein, Domain 2"/>
    <property type="match status" value="1"/>
</dbReference>
<dbReference type="Gene3D" id="1.10.287.40">
    <property type="entry name" value="Serine-tRNA synthetase, tRNA binding domain"/>
    <property type="match status" value="1"/>
</dbReference>
<dbReference type="HAMAP" id="MF_00176">
    <property type="entry name" value="Ser_tRNA_synth_type1"/>
    <property type="match status" value="1"/>
</dbReference>
<dbReference type="InterPro" id="IPR002314">
    <property type="entry name" value="aa-tRNA-synt_IIb"/>
</dbReference>
<dbReference type="InterPro" id="IPR006195">
    <property type="entry name" value="aa-tRNA-synth_II"/>
</dbReference>
<dbReference type="InterPro" id="IPR045864">
    <property type="entry name" value="aa-tRNA-synth_II/BPL/LPL"/>
</dbReference>
<dbReference type="InterPro" id="IPR002317">
    <property type="entry name" value="Ser-tRNA-ligase_type_1"/>
</dbReference>
<dbReference type="InterPro" id="IPR015866">
    <property type="entry name" value="Ser-tRNA-synth_1_N"/>
</dbReference>
<dbReference type="InterPro" id="IPR042103">
    <property type="entry name" value="SerRS_1_N_sf"/>
</dbReference>
<dbReference type="InterPro" id="IPR033729">
    <property type="entry name" value="SerRS_core"/>
</dbReference>
<dbReference type="InterPro" id="IPR010978">
    <property type="entry name" value="tRNA-bd_arm"/>
</dbReference>
<dbReference type="NCBIfam" id="TIGR00414">
    <property type="entry name" value="serS"/>
    <property type="match status" value="1"/>
</dbReference>
<dbReference type="PANTHER" id="PTHR43697:SF1">
    <property type="entry name" value="SERINE--TRNA LIGASE"/>
    <property type="match status" value="1"/>
</dbReference>
<dbReference type="PANTHER" id="PTHR43697">
    <property type="entry name" value="SERYL-TRNA SYNTHETASE"/>
    <property type="match status" value="1"/>
</dbReference>
<dbReference type="Pfam" id="PF02403">
    <property type="entry name" value="Seryl_tRNA_N"/>
    <property type="match status" value="1"/>
</dbReference>
<dbReference type="Pfam" id="PF00587">
    <property type="entry name" value="tRNA-synt_2b"/>
    <property type="match status" value="1"/>
</dbReference>
<dbReference type="PIRSF" id="PIRSF001529">
    <property type="entry name" value="Ser-tRNA-synth_IIa"/>
    <property type="match status" value="1"/>
</dbReference>
<dbReference type="PRINTS" id="PR00981">
    <property type="entry name" value="TRNASYNTHSER"/>
</dbReference>
<dbReference type="SUPFAM" id="SSF55681">
    <property type="entry name" value="Class II aaRS and biotin synthetases"/>
    <property type="match status" value="1"/>
</dbReference>
<dbReference type="SUPFAM" id="SSF46589">
    <property type="entry name" value="tRNA-binding arm"/>
    <property type="match status" value="1"/>
</dbReference>
<dbReference type="PROSITE" id="PS50862">
    <property type="entry name" value="AA_TRNA_LIGASE_II"/>
    <property type="match status" value="1"/>
</dbReference>
<keyword id="KW-0030">Aminoacyl-tRNA synthetase</keyword>
<keyword id="KW-0067">ATP-binding</keyword>
<keyword id="KW-0963">Cytoplasm</keyword>
<keyword id="KW-0436">Ligase</keyword>
<keyword id="KW-0547">Nucleotide-binding</keyword>
<keyword id="KW-0648">Protein biosynthesis</keyword>
<proteinExistence type="inferred from homology"/>
<name>SYS_CHLPM</name>